<protein>
    <recommendedName>
        <fullName>Izumo sperm-egg fusion protein 4</fullName>
    </recommendedName>
</protein>
<sequence>MALLLCLVGVTAALAHGCLHCHSKFSEKFSFYRHHVNLKSWWVGDIPVSGALLTDWSDDTMKELHLAIPAEITREKLDQVATAVYQRMDQLYQGKMYFPGYFPNELRNIFREQVHLIQNAIIESRLDCQRHCGIFQYETISCNNCTDSHVACFGYNCESSEQWESAVQGLLNYINNWHKQDVSMRATPAFLVSPAFRCLEPPHLANLTLEDAAECLKQH</sequence>
<organism>
    <name type="scientific">Macaca fascicularis</name>
    <name type="common">Crab-eating macaque</name>
    <name type="synonym">Cynomolgus monkey</name>
    <dbReference type="NCBI Taxonomy" id="9541"/>
    <lineage>
        <taxon>Eukaryota</taxon>
        <taxon>Metazoa</taxon>
        <taxon>Chordata</taxon>
        <taxon>Craniata</taxon>
        <taxon>Vertebrata</taxon>
        <taxon>Euteleostomi</taxon>
        <taxon>Mammalia</taxon>
        <taxon>Eutheria</taxon>
        <taxon>Euarchontoglires</taxon>
        <taxon>Primates</taxon>
        <taxon>Haplorrhini</taxon>
        <taxon>Catarrhini</taxon>
        <taxon>Cercopithecidae</taxon>
        <taxon>Cercopithecinae</taxon>
        <taxon>Macaca</taxon>
    </lineage>
</organism>
<evidence type="ECO:0000255" key="1"/>
<evidence type="ECO:0000305" key="2"/>
<feature type="signal peptide" evidence="1">
    <location>
        <begin position="1"/>
        <end position="15"/>
    </location>
</feature>
<feature type="chain" id="PRO_0000278187" description="Izumo sperm-egg fusion protein 4">
    <location>
        <begin position="16"/>
        <end position="219"/>
    </location>
</feature>
<feature type="glycosylation site" description="N-linked (GlcNAc...) asparagine" evidence="1">
    <location>
        <position position="206"/>
    </location>
</feature>
<proteinExistence type="evidence at transcript level"/>
<reference key="1">
    <citation type="submission" date="2005-06" db="EMBL/GenBank/DDBJ databases">
        <title>DNA sequences of macaque genes expressed in brain or testis and its evolutionary implications.</title>
        <authorList>
            <consortium name="International consortium for macaque cDNA sequencing and analysis"/>
        </authorList>
    </citation>
    <scope>NUCLEOTIDE SEQUENCE [LARGE SCALE MRNA]</scope>
    <source>
        <tissue>Testis</tissue>
    </source>
</reference>
<accession>Q4R6V5</accession>
<name>IZUM4_MACFA</name>
<gene>
    <name type="primary">IZUMO4</name>
    <name type="ORF">QtsA-17041</name>
</gene>
<keyword id="KW-0325">Glycoprotein</keyword>
<keyword id="KW-1185">Reference proteome</keyword>
<keyword id="KW-0964">Secreted</keyword>
<keyword id="KW-0732">Signal</keyword>
<comment type="subcellular location">
    <subcellularLocation>
        <location evidence="2">Secreted</location>
    </subcellularLocation>
</comment>
<comment type="miscellaneous">
    <text>Izumo is the name of a Japanese shrine to marriage.</text>
</comment>
<comment type="similarity">
    <text evidence="2">Belongs to the Izumo family.</text>
</comment>
<dbReference type="EMBL" id="AB169075">
    <property type="protein sequence ID" value="BAE01169.1"/>
    <property type="molecule type" value="mRNA"/>
</dbReference>
<dbReference type="RefSeq" id="NP_001274619.1">
    <property type="nucleotide sequence ID" value="NM_001287690.1"/>
</dbReference>
<dbReference type="RefSeq" id="XP_045234392.1">
    <property type="nucleotide sequence ID" value="XM_045378457.2"/>
</dbReference>
<dbReference type="STRING" id="9541.ENSMFAP00000025065"/>
<dbReference type="GlyCosmos" id="Q4R6V5">
    <property type="glycosylation" value="1 site, No reported glycans"/>
</dbReference>
<dbReference type="Ensembl" id="ENSMFAT00000033218.2">
    <property type="protein sequence ID" value="ENSMFAP00000025071.2"/>
    <property type="gene ID" value="ENSMFAG00000044044.2"/>
</dbReference>
<dbReference type="GeneID" id="102139078"/>
<dbReference type="eggNOG" id="ENOG502SNMJ">
    <property type="taxonomic scope" value="Eukaryota"/>
</dbReference>
<dbReference type="GeneTree" id="ENSGT00390000015418"/>
<dbReference type="Proteomes" id="UP000233100">
    <property type="component" value="Chromosome 19"/>
</dbReference>
<dbReference type="Bgee" id="ENSMFAG00000044044">
    <property type="expression patterns" value="Expressed in pituitary gland and 10 other cell types or tissues"/>
</dbReference>
<dbReference type="GO" id="GO:0005576">
    <property type="term" value="C:extracellular region"/>
    <property type="evidence" value="ECO:0007669"/>
    <property type="project" value="UniProtKB-SubCell"/>
</dbReference>
<dbReference type="GO" id="GO:0005634">
    <property type="term" value="C:nucleus"/>
    <property type="evidence" value="ECO:0007669"/>
    <property type="project" value="TreeGrafter"/>
</dbReference>
<dbReference type="InterPro" id="IPR029389">
    <property type="entry name" value="IZUMO"/>
</dbReference>
<dbReference type="InterPro" id="IPR052868">
    <property type="entry name" value="Izumo_fusion"/>
</dbReference>
<dbReference type="PANTHER" id="PTHR37357">
    <property type="entry name" value="IZUMO SPERM-EGG FUSION PROTEIN 4"/>
    <property type="match status" value="1"/>
</dbReference>
<dbReference type="PANTHER" id="PTHR37357:SF1">
    <property type="entry name" value="IZUMO SPERM-EGG FUSION PROTEIN 4"/>
    <property type="match status" value="1"/>
</dbReference>
<dbReference type="Pfam" id="PF15005">
    <property type="entry name" value="IZUMO"/>
    <property type="match status" value="1"/>
</dbReference>